<dbReference type="EMBL" id="CP000825">
    <property type="protein sequence ID" value="ABV50848.1"/>
    <property type="molecule type" value="Genomic_DNA"/>
</dbReference>
<dbReference type="SMR" id="A8G5G7"/>
<dbReference type="STRING" id="93060.P9215_12331"/>
<dbReference type="KEGG" id="pmh:P9215_12331"/>
<dbReference type="eggNOG" id="COG0353">
    <property type="taxonomic scope" value="Bacteria"/>
</dbReference>
<dbReference type="HOGENOM" id="CLU_060739_1_0_3"/>
<dbReference type="Proteomes" id="UP000002014">
    <property type="component" value="Chromosome"/>
</dbReference>
<dbReference type="GO" id="GO:0003677">
    <property type="term" value="F:DNA binding"/>
    <property type="evidence" value="ECO:0007669"/>
    <property type="project" value="UniProtKB-UniRule"/>
</dbReference>
<dbReference type="GO" id="GO:0008270">
    <property type="term" value="F:zinc ion binding"/>
    <property type="evidence" value="ECO:0007669"/>
    <property type="project" value="UniProtKB-KW"/>
</dbReference>
<dbReference type="GO" id="GO:0006310">
    <property type="term" value="P:DNA recombination"/>
    <property type="evidence" value="ECO:0007669"/>
    <property type="project" value="UniProtKB-UniRule"/>
</dbReference>
<dbReference type="GO" id="GO:0006281">
    <property type="term" value="P:DNA repair"/>
    <property type="evidence" value="ECO:0007669"/>
    <property type="project" value="UniProtKB-UniRule"/>
</dbReference>
<dbReference type="CDD" id="cd01025">
    <property type="entry name" value="TOPRIM_recR"/>
    <property type="match status" value="1"/>
</dbReference>
<dbReference type="Gene3D" id="3.30.60.80">
    <property type="match status" value="1"/>
</dbReference>
<dbReference type="Gene3D" id="3.40.1360.10">
    <property type="match status" value="1"/>
</dbReference>
<dbReference type="Gene3D" id="6.10.250.240">
    <property type="match status" value="1"/>
</dbReference>
<dbReference type="Gene3D" id="1.10.8.420">
    <property type="entry name" value="RecR Domain 1"/>
    <property type="match status" value="1"/>
</dbReference>
<dbReference type="HAMAP" id="MF_00017">
    <property type="entry name" value="RecR"/>
    <property type="match status" value="1"/>
</dbReference>
<dbReference type="InterPro" id="IPR000093">
    <property type="entry name" value="DNA_Rcmb_RecR"/>
</dbReference>
<dbReference type="InterPro" id="IPR023627">
    <property type="entry name" value="Rcmb_RecR"/>
</dbReference>
<dbReference type="InterPro" id="IPR015967">
    <property type="entry name" value="Rcmb_RecR_Znf"/>
</dbReference>
<dbReference type="InterPro" id="IPR006171">
    <property type="entry name" value="TOPRIM_dom"/>
</dbReference>
<dbReference type="InterPro" id="IPR034137">
    <property type="entry name" value="TOPRIM_RecR"/>
</dbReference>
<dbReference type="NCBIfam" id="TIGR00615">
    <property type="entry name" value="recR"/>
    <property type="match status" value="1"/>
</dbReference>
<dbReference type="PANTHER" id="PTHR30446">
    <property type="entry name" value="RECOMBINATION PROTEIN RECR"/>
    <property type="match status" value="1"/>
</dbReference>
<dbReference type="PANTHER" id="PTHR30446:SF0">
    <property type="entry name" value="RECOMBINATION PROTEIN RECR"/>
    <property type="match status" value="1"/>
</dbReference>
<dbReference type="Pfam" id="PF21175">
    <property type="entry name" value="RecR_C"/>
    <property type="match status" value="1"/>
</dbReference>
<dbReference type="Pfam" id="PF21176">
    <property type="entry name" value="RecR_HhH"/>
    <property type="match status" value="1"/>
</dbReference>
<dbReference type="Pfam" id="PF02132">
    <property type="entry name" value="RecR_ZnF"/>
    <property type="match status" value="1"/>
</dbReference>
<dbReference type="Pfam" id="PF13662">
    <property type="entry name" value="Toprim_4"/>
    <property type="match status" value="1"/>
</dbReference>
<dbReference type="SMART" id="SM00493">
    <property type="entry name" value="TOPRIM"/>
    <property type="match status" value="1"/>
</dbReference>
<dbReference type="SUPFAM" id="SSF111304">
    <property type="entry name" value="Recombination protein RecR"/>
    <property type="match status" value="1"/>
</dbReference>
<dbReference type="PROSITE" id="PS01300">
    <property type="entry name" value="RECR"/>
    <property type="match status" value="1"/>
</dbReference>
<dbReference type="PROSITE" id="PS50880">
    <property type="entry name" value="TOPRIM"/>
    <property type="match status" value="1"/>
</dbReference>
<keyword id="KW-0227">DNA damage</keyword>
<keyword id="KW-0233">DNA recombination</keyword>
<keyword id="KW-0234">DNA repair</keyword>
<keyword id="KW-0479">Metal-binding</keyword>
<keyword id="KW-0862">Zinc</keyword>
<keyword id="KW-0863">Zinc-finger</keyword>
<reference key="1">
    <citation type="journal article" date="2007" name="PLoS Genet.">
        <title>Patterns and implications of gene gain and loss in the evolution of Prochlorococcus.</title>
        <authorList>
            <person name="Kettler G.C."/>
            <person name="Martiny A.C."/>
            <person name="Huang K."/>
            <person name="Zucker J."/>
            <person name="Coleman M.L."/>
            <person name="Rodrigue S."/>
            <person name="Chen F."/>
            <person name="Lapidus A."/>
            <person name="Ferriera S."/>
            <person name="Johnson J."/>
            <person name="Steglich C."/>
            <person name="Church G.M."/>
            <person name="Richardson P."/>
            <person name="Chisholm S.W."/>
        </authorList>
    </citation>
    <scope>NUCLEOTIDE SEQUENCE [LARGE SCALE GENOMIC DNA]</scope>
    <source>
        <strain>MIT 9215</strain>
    </source>
</reference>
<comment type="function">
    <text evidence="1">May play a role in DNA repair. It seems to be involved in an RecBC-independent recombinational process of DNA repair. It may act with RecF and RecO.</text>
</comment>
<comment type="similarity">
    <text evidence="1">Belongs to the RecR family.</text>
</comment>
<organism>
    <name type="scientific">Prochlorococcus marinus (strain MIT 9215)</name>
    <dbReference type="NCBI Taxonomy" id="93060"/>
    <lineage>
        <taxon>Bacteria</taxon>
        <taxon>Bacillati</taxon>
        <taxon>Cyanobacteriota</taxon>
        <taxon>Cyanophyceae</taxon>
        <taxon>Synechococcales</taxon>
        <taxon>Prochlorococcaceae</taxon>
        <taxon>Prochlorococcus</taxon>
    </lineage>
</organism>
<accession>A8G5G7</accession>
<feature type="chain" id="PRO_0000322931" description="Recombination protein RecR">
    <location>
        <begin position="1"/>
        <end position="201"/>
    </location>
</feature>
<feature type="domain" description="Toprim" evidence="1">
    <location>
        <begin position="83"/>
        <end position="177"/>
    </location>
</feature>
<feature type="zinc finger region" description="C4-type" evidence="1">
    <location>
        <begin position="60"/>
        <end position="75"/>
    </location>
</feature>
<name>RECR_PROM2</name>
<gene>
    <name evidence="1" type="primary">recR</name>
    <name type="ordered locus">P9215_12331</name>
</gene>
<sequence>MILITYTKPLSKLIGHFEKFPGIGPRTAQRLALFILKQPESTIRDFSEALLEAHSNVGRCKKCFNLTSEDECEICKNTQRNQKLICVVAETKDLLALERAREFKGVYHVIGGLISPMDSVGPELLEIRSLVERVSKSEIDEIILALTPSVEGDTTSLYIGKLLAPFTKVTRIAYGLPMGSELEYVDEVTLARALEGRTNLN</sequence>
<protein>
    <recommendedName>
        <fullName evidence="1">Recombination protein RecR</fullName>
    </recommendedName>
</protein>
<evidence type="ECO:0000255" key="1">
    <source>
        <dbReference type="HAMAP-Rule" id="MF_00017"/>
    </source>
</evidence>
<proteinExistence type="inferred from homology"/>